<accession>Q07579</accession>
<feature type="chain" id="PRO_0000078698" description="Neuraminidase">
    <location>
        <begin position="1"/>
        <end position="470"/>
    </location>
</feature>
<feature type="topological domain" description="Intravirion" evidence="1">
    <location>
        <begin position="1"/>
        <end position="14"/>
    </location>
</feature>
<feature type="transmembrane region" description="Helical" evidence="1">
    <location>
        <begin position="15"/>
        <end position="35"/>
    </location>
</feature>
<feature type="topological domain" description="Virion surface" evidence="1">
    <location>
        <begin position="36"/>
        <end position="470"/>
    </location>
</feature>
<feature type="region of interest" description="Involved in apical transport and lipid raft association" evidence="1">
    <location>
        <begin position="11"/>
        <end position="32"/>
    </location>
</feature>
<feature type="region of interest" description="Hypervariable stalk region" evidence="1">
    <location>
        <begin position="32"/>
        <end position="86"/>
    </location>
</feature>
<feature type="region of interest" description="Head of neuraminidase" evidence="1">
    <location>
        <begin position="89"/>
        <end position="470"/>
    </location>
</feature>
<feature type="active site" description="Proton donor/acceptor" evidence="1">
    <location>
        <position position="149"/>
    </location>
</feature>
<feature type="active site" description="Nucleophile" evidence="1">
    <location>
        <position position="402"/>
    </location>
</feature>
<feature type="binding site" evidence="1">
    <location>
        <position position="116"/>
    </location>
    <ligand>
        <name>substrate</name>
    </ligand>
</feature>
<feature type="binding site" evidence="1">
    <location>
        <position position="150"/>
    </location>
    <ligand>
        <name>substrate</name>
    </ligand>
</feature>
<feature type="binding site" evidence="1">
    <location>
        <begin position="275"/>
        <end position="276"/>
    </location>
    <ligand>
        <name>substrate</name>
    </ligand>
</feature>
<feature type="binding site" evidence="1">
    <location>
        <position position="291"/>
    </location>
    <ligand>
        <name>substrate</name>
    </ligand>
</feature>
<feature type="binding site" evidence="1">
    <location>
        <position position="292"/>
    </location>
    <ligand>
        <name>Ca(2+)</name>
        <dbReference type="ChEBI" id="CHEBI:29108"/>
    </ligand>
</feature>
<feature type="binding site" evidence="1">
    <location>
        <position position="296"/>
    </location>
    <ligand>
        <name>Ca(2+)</name>
        <dbReference type="ChEBI" id="CHEBI:29108"/>
    </ligand>
</feature>
<feature type="binding site" evidence="1">
    <location>
        <position position="322"/>
    </location>
    <ligand>
        <name>Ca(2+)</name>
        <dbReference type="ChEBI" id="CHEBI:29108"/>
    </ligand>
</feature>
<feature type="binding site" evidence="1">
    <location>
        <position position="368"/>
    </location>
    <ligand>
        <name>substrate</name>
    </ligand>
</feature>
<feature type="glycosylation site" description="N-linked (GlcNAc...) asparagine; by host" evidence="1">
    <location>
        <position position="39"/>
    </location>
</feature>
<feature type="glycosylation site" description="N-linked (GlcNAc...) asparagine; by host" evidence="1">
    <location>
        <position position="46"/>
    </location>
</feature>
<feature type="glycosylation site" description="N-linked (GlcNAc...) asparagine; by host" evidence="1">
    <location>
        <position position="54"/>
    </location>
</feature>
<feature type="glycosylation site" description="N-linked (GlcNAc...) asparagine; by host" evidence="1">
    <location>
        <position position="144"/>
    </location>
</feature>
<feature type="glycosylation site" description="N-linked (GlcNAc...) asparagine; by host" evidence="1">
    <location>
        <position position="293"/>
    </location>
</feature>
<feature type="glycosylation site" description="N-linked (GlcNAc...) asparagine; by host" evidence="1">
    <location>
        <position position="398"/>
    </location>
</feature>
<feature type="disulfide bond" evidence="1">
    <location>
        <begin position="90"/>
        <end position="417"/>
    </location>
</feature>
<feature type="disulfide bond" evidence="1">
    <location>
        <begin position="122"/>
        <end position="127"/>
    </location>
</feature>
<feature type="disulfide bond" evidence="1">
    <location>
        <begin position="182"/>
        <end position="229"/>
    </location>
</feature>
<feature type="disulfide bond" evidence="1">
    <location>
        <begin position="231"/>
        <end position="236"/>
    </location>
</feature>
<feature type="disulfide bond" evidence="1">
    <location>
        <begin position="277"/>
        <end position="290"/>
    </location>
</feature>
<feature type="disulfide bond" evidence="1">
    <location>
        <begin position="279"/>
        <end position="288"/>
    </location>
</feature>
<feature type="disulfide bond" evidence="1">
    <location>
        <begin position="316"/>
        <end position="335"/>
    </location>
</feature>
<feature type="disulfide bond" evidence="1">
    <location>
        <begin position="421"/>
        <end position="446"/>
    </location>
</feature>
<name>NRAM_I63A2</name>
<sequence length="470" mass="51970">MNPNQKIITIGSASLGLVILNVILHVVSIIVTVLVLSNNGTGPNCNGTIIREYNETVRVERITQWYNTNIIEYIEEPSNEYYMSNTEPLCEAQGFAPFSKDNGIRIGSRGHVFVIREPFVSCSPLECRTFFLTQGSLLNDKHSNGTVKDRSPYRTLMSVEVGQSPNVYQARFEAVAWSATACHDGKKWMTVGVTGPDAQAVAVVHYGGVPVDVINSWAGDILRTQESSCTCIKGDCYWVMTDGPANRQAQYRIFKAKDGRIIGQTDINFNGGHIEECSCYPNEGKVECVCRDNWTGTNRPVLVISPDLSYTVGYLCAGIPTDTPRGEDSQFTGSCTSPLGSQGYGVKGFGFRQGNDVWAGRTISRTSRSGFEIIKIRNGWTQNSKDQIRKQVIVDNLNWSGYSGSFTLPVELTKKGCLVPCFWVEMIRGKPEEITIWTSSSSIVMCGVDHKVASWSWHDGAILPFDIDKM</sequence>
<proteinExistence type="inferred from homology"/>
<reference key="1">
    <citation type="journal article" date="1993" name="Virology">
        <title>Phylogenetic analysis of the N8 neuraminidase gene of influenza A viruses.</title>
        <authorList>
            <person name="Saito T."/>
            <person name="Kawaoka Y."/>
            <person name="Webster R.G."/>
        </authorList>
    </citation>
    <scope>NUCLEOTIDE SEQUENCE [GENOMIC RNA]</scope>
</reference>
<reference key="2">
    <citation type="journal article" date="2004" name="Virus Res.">
        <title>Assembly and budding of influenza virus.</title>
        <authorList>
            <person name="Nayak D.P."/>
            <person name="Hui E.K."/>
            <person name="Barman S."/>
        </authorList>
    </citation>
    <scope>REVIEW</scope>
</reference>
<reference key="3">
    <citation type="journal article" date="2005" name="N. Engl. J. Med.">
        <title>Neuraminidase inhibitors for influenza.</title>
        <authorList>
            <person name="Moscona A."/>
        </authorList>
    </citation>
    <scope>REVIEW</scope>
</reference>
<reference key="4">
    <citation type="journal article" date="2005" name="Biol. Pharm. Bull.">
        <title>Sialobiology of influenza: molecular mechanism of host range variation of influenza viruses.</title>
        <authorList>
            <person name="Suzuki Y."/>
        </authorList>
    </citation>
    <scope>REVIEW</scope>
</reference>
<keyword id="KW-0106">Calcium</keyword>
<keyword id="KW-1015">Disulfide bond</keyword>
<keyword id="KW-0325">Glycoprotein</keyword>
<keyword id="KW-0326">Glycosidase</keyword>
<keyword id="KW-1032">Host cell membrane</keyword>
<keyword id="KW-1043">Host membrane</keyword>
<keyword id="KW-0378">Hydrolase</keyword>
<keyword id="KW-0472">Membrane</keyword>
<keyword id="KW-0479">Metal-binding</keyword>
<keyword id="KW-0735">Signal-anchor</keyword>
<keyword id="KW-0812">Transmembrane</keyword>
<keyword id="KW-1133">Transmembrane helix</keyword>
<keyword id="KW-0946">Virion</keyword>
<gene>
    <name evidence="1" type="primary">NA</name>
</gene>
<protein>
    <recommendedName>
        <fullName evidence="1">Neuraminidase</fullName>
        <ecNumber evidence="1">3.2.1.18</ecNumber>
    </recommendedName>
</protein>
<organism>
    <name type="scientific">Influenza A virus (strain A/Equine/Miami/1/1963 H3N8)</name>
    <dbReference type="NCBI Taxonomy" id="387222"/>
    <lineage>
        <taxon>Viruses</taxon>
        <taxon>Riboviria</taxon>
        <taxon>Orthornavirae</taxon>
        <taxon>Negarnaviricota</taxon>
        <taxon>Polyploviricotina</taxon>
        <taxon>Insthoviricetes</taxon>
        <taxon>Articulavirales</taxon>
        <taxon>Orthomyxoviridae</taxon>
        <taxon>Alphainfluenzavirus</taxon>
        <taxon>Alphainfluenzavirus influenzae</taxon>
        <taxon>Influenza A virus</taxon>
    </lineage>
</organism>
<evidence type="ECO:0000255" key="1">
    <source>
        <dbReference type="HAMAP-Rule" id="MF_04071"/>
    </source>
</evidence>
<comment type="function">
    <text evidence="1">Catalyzes the removal of terminal sialic acid residues from viral and cellular glycoconjugates. Cleaves off the terminal sialic acids on the glycosylated HA during virus budding to facilitate virus release. Additionally helps virus spread through the circulation by further removing sialic acids from the cell surface. These cleavages prevent self-aggregation and ensure the efficient spread of the progeny virus from cell to cell. Otherwise, infection would be limited to one round of replication. Described as a receptor-destroying enzyme because it cleaves a terminal sialic acid from the cellular receptors. May facilitate viral invasion of the upper airways by cleaving the sialic acid moieties on the mucin of the airway epithelial cells. Likely to plays a role in the budding process through its association with lipid rafts during intracellular transport. May additionally display a raft-association independent effect on budding. Plays a role in the determination of host range restriction on replication and virulence. Sialidase activity in late endosome/lysosome traffic seems to enhance virus replication.</text>
</comment>
<comment type="catalytic activity">
    <reaction evidence="1">
        <text>Hydrolysis of alpha-(2-&gt;3)-, alpha-(2-&gt;6)-, alpha-(2-&gt;8)- glycosidic linkages of terminal sialic acid residues in oligosaccharides, glycoproteins, glycolipids, colominic acid and synthetic substrates.</text>
        <dbReference type="EC" id="3.2.1.18"/>
    </reaction>
</comment>
<comment type="cofactor">
    <cofactor evidence="1">
        <name>Ca(2+)</name>
        <dbReference type="ChEBI" id="CHEBI:29108"/>
    </cofactor>
</comment>
<comment type="activity regulation">
    <text evidence="1">Inhibited by the neuraminidase inhibitors zanamivir (Relenza) and oseltamivir (Tamiflu). These drugs interfere with the release of progeny virus from infected cells and are effective against all influenza strains. Resistance to neuraminidase inhibitors is quite rare.</text>
</comment>
<comment type="subunit">
    <text evidence="1">Homotetramer.</text>
</comment>
<comment type="subcellular location">
    <subcellularLocation>
        <location evidence="1">Virion membrane</location>
    </subcellularLocation>
    <subcellularLocation>
        <location evidence="1">Host apical cell membrane</location>
        <topology evidence="1">Single-pass type II membrane protein</topology>
    </subcellularLocation>
    <text evidence="1">Preferentially accumulates at the apical plasma membrane in infected polarized epithelial cells, which is the virus assembly site. Uses lipid rafts for cell surface transport and apical sorting. In the virion, forms a mushroom-shaped spike on the surface of the membrane.</text>
</comment>
<comment type="domain">
    <text evidence="1">Intact N-terminus is essential for virion morphogenesis. Possesses two apical sorting signals, one in the ectodomain, which is likely to be a glycan, and the other in the transmembrane domain. The transmembrane domain also plays a role in lipid raft association.</text>
</comment>
<comment type="PTM">
    <text evidence="1">N-glycosylated.</text>
</comment>
<comment type="miscellaneous">
    <text>The influenza A genome consist of 8 RNA segments. Genetic variation of hemagglutinin and/or neuraminidase genes results in the emergence of new influenza strains. The mechanism of variation can be the result of point mutations or the result of genetic reassortment between segments of two different strains.</text>
</comment>
<comment type="similarity">
    <text evidence="1">Belongs to the glycosyl hydrolase 34 family.</text>
</comment>
<dbReference type="EC" id="3.2.1.18" evidence="1"/>
<dbReference type="EMBL" id="L06580">
    <property type="protein sequence ID" value="AAA43409.1"/>
    <property type="molecule type" value="Genomic_RNA"/>
</dbReference>
<dbReference type="SMR" id="Q07579"/>
<dbReference type="CAZy" id="GH34">
    <property type="family name" value="Glycoside Hydrolase Family 34"/>
</dbReference>
<dbReference type="GlyCosmos" id="Q07579">
    <property type="glycosylation" value="6 sites, No reported glycans"/>
</dbReference>
<dbReference type="GO" id="GO:0020002">
    <property type="term" value="C:host cell plasma membrane"/>
    <property type="evidence" value="ECO:0007669"/>
    <property type="project" value="UniProtKB-SubCell"/>
</dbReference>
<dbReference type="GO" id="GO:0016020">
    <property type="term" value="C:membrane"/>
    <property type="evidence" value="ECO:0007669"/>
    <property type="project" value="UniProtKB-UniRule"/>
</dbReference>
<dbReference type="GO" id="GO:0055036">
    <property type="term" value="C:virion membrane"/>
    <property type="evidence" value="ECO:0007669"/>
    <property type="project" value="UniProtKB-SubCell"/>
</dbReference>
<dbReference type="GO" id="GO:0004308">
    <property type="term" value="F:exo-alpha-sialidase activity"/>
    <property type="evidence" value="ECO:0007669"/>
    <property type="project" value="UniProtKB-UniRule"/>
</dbReference>
<dbReference type="GO" id="GO:0046872">
    <property type="term" value="F:metal ion binding"/>
    <property type="evidence" value="ECO:0007669"/>
    <property type="project" value="UniProtKB-UniRule"/>
</dbReference>
<dbReference type="GO" id="GO:0005975">
    <property type="term" value="P:carbohydrate metabolic process"/>
    <property type="evidence" value="ECO:0007669"/>
    <property type="project" value="InterPro"/>
</dbReference>
<dbReference type="GO" id="GO:0046761">
    <property type="term" value="P:viral budding from plasma membrane"/>
    <property type="evidence" value="ECO:0007669"/>
    <property type="project" value="UniProtKB-UniRule"/>
</dbReference>
<dbReference type="Gene3D" id="2.120.10.10">
    <property type="match status" value="1"/>
</dbReference>
<dbReference type="HAMAP" id="MF_04071">
    <property type="entry name" value="INFV_NRAM"/>
    <property type="match status" value="1"/>
</dbReference>
<dbReference type="InterPro" id="IPR001860">
    <property type="entry name" value="Glyco_hydro_34"/>
</dbReference>
<dbReference type="InterPro" id="IPR036278">
    <property type="entry name" value="Sialidase_sf"/>
</dbReference>
<dbReference type="Pfam" id="PF00064">
    <property type="entry name" value="Neur"/>
    <property type="match status" value="1"/>
</dbReference>
<dbReference type="SUPFAM" id="SSF50939">
    <property type="entry name" value="Sialidases"/>
    <property type="match status" value="1"/>
</dbReference>
<organismHost>
    <name type="scientific">Aves</name>
    <dbReference type="NCBI Taxonomy" id="8782"/>
</organismHost>
<organismHost>
    <name type="scientific">Equus caballus</name>
    <name type="common">Horse</name>
    <dbReference type="NCBI Taxonomy" id="9796"/>
</organismHost>